<comment type="function">
    <text evidence="1">Possesses E3 ubiquitin-protein ligase activity.</text>
</comment>
<comment type="catalytic activity">
    <reaction evidence="6">
        <text>S-ubiquitinyl-[E2 ubiquitin-conjugating enzyme]-L-cysteine + [acceptor protein]-L-lysine = [E2 ubiquitin-conjugating enzyme]-L-cysteine + N(6)-ubiquitinyl-[acceptor protein]-L-lysine.</text>
        <dbReference type="EC" id="2.3.2.27"/>
    </reaction>
</comment>
<comment type="pathway">
    <text>Protein modification; protein ubiquitination.</text>
</comment>
<comment type="subcellular location">
    <subcellularLocation>
        <location evidence="4">Plastid</location>
        <location evidence="4">Chloroplast outer membrane</location>
        <topology evidence="2">Multi-pass membrane protein</topology>
    </subcellularLocation>
</comment>
<name>SPL2P_ARATH</name>
<organism>
    <name type="scientific">Arabidopsis thaliana</name>
    <name type="common">Mouse-ear cress</name>
    <dbReference type="NCBI Taxonomy" id="3702"/>
    <lineage>
        <taxon>Eukaryota</taxon>
        <taxon>Viridiplantae</taxon>
        <taxon>Streptophyta</taxon>
        <taxon>Embryophyta</taxon>
        <taxon>Tracheophyta</taxon>
        <taxon>Spermatophyta</taxon>
        <taxon>Magnoliopsida</taxon>
        <taxon>eudicotyledons</taxon>
        <taxon>Gunneridae</taxon>
        <taxon>Pentapetalae</taxon>
        <taxon>rosids</taxon>
        <taxon>malvids</taxon>
        <taxon>Brassicales</taxon>
        <taxon>Brassicaceae</taxon>
        <taxon>Camelineae</taxon>
        <taxon>Arabidopsis</taxon>
    </lineage>
</organism>
<reference key="1">
    <citation type="journal article" date="2000" name="Nature">
        <title>Sequence and analysis of chromosome 1 of the plant Arabidopsis thaliana.</title>
        <authorList>
            <person name="Theologis A."/>
            <person name="Ecker J.R."/>
            <person name="Palm C.J."/>
            <person name="Federspiel N.A."/>
            <person name="Kaul S."/>
            <person name="White O."/>
            <person name="Alonso J."/>
            <person name="Altafi H."/>
            <person name="Araujo R."/>
            <person name="Bowman C.L."/>
            <person name="Brooks S.Y."/>
            <person name="Buehler E."/>
            <person name="Chan A."/>
            <person name="Chao Q."/>
            <person name="Chen H."/>
            <person name="Cheuk R.F."/>
            <person name="Chin C.W."/>
            <person name="Chung M.K."/>
            <person name="Conn L."/>
            <person name="Conway A.B."/>
            <person name="Conway A.R."/>
            <person name="Creasy T.H."/>
            <person name="Dewar K."/>
            <person name="Dunn P."/>
            <person name="Etgu P."/>
            <person name="Feldblyum T.V."/>
            <person name="Feng J.-D."/>
            <person name="Fong B."/>
            <person name="Fujii C.Y."/>
            <person name="Gill J.E."/>
            <person name="Goldsmith A.D."/>
            <person name="Haas B."/>
            <person name="Hansen N.F."/>
            <person name="Hughes B."/>
            <person name="Huizar L."/>
            <person name="Hunter J.L."/>
            <person name="Jenkins J."/>
            <person name="Johnson-Hopson C."/>
            <person name="Khan S."/>
            <person name="Khaykin E."/>
            <person name="Kim C.J."/>
            <person name="Koo H.L."/>
            <person name="Kremenetskaia I."/>
            <person name="Kurtz D.B."/>
            <person name="Kwan A."/>
            <person name="Lam B."/>
            <person name="Langin-Hooper S."/>
            <person name="Lee A."/>
            <person name="Lee J.M."/>
            <person name="Lenz C.A."/>
            <person name="Li J.H."/>
            <person name="Li Y.-P."/>
            <person name="Lin X."/>
            <person name="Liu S.X."/>
            <person name="Liu Z.A."/>
            <person name="Luros J.S."/>
            <person name="Maiti R."/>
            <person name="Marziali A."/>
            <person name="Militscher J."/>
            <person name="Miranda M."/>
            <person name="Nguyen M."/>
            <person name="Nierman W.C."/>
            <person name="Osborne B.I."/>
            <person name="Pai G."/>
            <person name="Peterson J."/>
            <person name="Pham P.K."/>
            <person name="Rizzo M."/>
            <person name="Rooney T."/>
            <person name="Rowley D."/>
            <person name="Sakano H."/>
            <person name="Salzberg S.L."/>
            <person name="Schwartz J.R."/>
            <person name="Shinn P."/>
            <person name="Southwick A.M."/>
            <person name="Sun H."/>
            <person name="Tallon L.J."/>
            <person name="Tambunga G."/>
            <person name="Toriumi M.J."/>
            <person name="Town C.D."/>
            <person name="Utterback T."/>
            <person name="Van Aken S."/>
            <person name="Vaysberg M."/>
            <person name="Vysotskaia V.S."/>
            <person name="Walker M."/>
            <person name="Wu D."/>
            <person name="Yu G."/>
            <person name="Fraser C.M."/>
            <person name="Venter J.C."/>
            <person name="Davis R.W."/>
        </authorList>
    </citation>
    <scope>NUCLEOTIDE SEQUENCE [LARGE SCALE GENOMIC DNA]</scope>
    <source>
        <strain>cv. Columbia</strain>
    </source>
</reference>
<reference key="2">
    <citation type="journal article" date="2017" name="Plant J.">
        <title>Araport11: a complete reannotation of the Arabidopsis thaliana reference genome.</title>
        <authorList>
            <person name="Cheng C.Y."/>
            <person name="Krishnakumar V."/>
            <person name="Chan A.P."/>
            <person name="Thibaud-Nissen F."/>
            <person name="Schobel S."/>
            <person name="Town C.D."/>
        </authorList>
    </citation>
    <scope>GENOME REANNOTATION</scope>
    <source>
        <strain>cv. Columbia</strain>
    </source>
</reference>
<reference key="3">
    <citation type="journal article" date="2003" name="Science">
        <title>Empirical analysis of transcriptional activity in the Arabidopsis genome.</title>
        <authorList>
            <person name="Yamada K."/>
            <person name="Lim J."/>
            <person name="Dale J.M."/>
            <person name="Chen H."/>
            <person name="Shinn P."/>
            <person name="Palm C.J."/>
            <person name="Southwick A.M."/>
            <person name="Wu H.C."/>
            <person name="Kim C.J."/>
            <person name="Nguyen M."/>
            <person name="Pham P.K."/>
            <person name="Cheuk R.F."/>
            <person name="Karlin-Newmann G."/>
            <person name="Liu S.X."/>
            <person name="Lam B."/>
            <person name="Sakano H."/>
            <person name="Wu T."/>
            <person name="Yu G."/>
            <person name="Miranda M."/>
            <person name="Quach H.L."/>
            <person name="Tripp M."/>
            <person name="Chang C.H."/>
            <person name="Lee J.M."/>
            <person name="Toriumi M.J."/>
            <person name="Chan M.M."/>
            <person name="Tang C.C."/>
            <person name="Onodera C.S."/>
            <person name="Deng J.M."/>
            <person name="Akiyama K."/>
            <person name="Ansari Y."/>
            <person name="Arakawa T."/>
            <person name="Banh J."/>
            <person name="Banno F."/>
            <person name="Bowser L."/>
            <person name="Brooks S.Y."/>
            <person name="Carninci P."/>
            <person name="Chao Q."/>
            <person name="Choy N."/>
            <person name="Enju A."/>
            <person name="Goldsmith A.D."/>
            <person name="Gurjal M."/>
            <person name="Hansen N.F."/>
            <person name="Hayashizaki Y."/>
            <person name="Johnson-Hopson C."/>
            <person name="Hsuan V.W."/>
            <person name="Iida K."/>
            <person name="Karnes M."/>
            <person name="Khan S."/>
            <person name="Koesema E."/>
            <person name="Ishida J."/>
            <person name="Jiang P.X."/>
            <person name="Jones T."/>
            <person name="Kawai J."/>
            <person name="Kamiya A."/>
            <person name="Meyers C."/>
            <person name="Nakajima M."/>
            <person name="Narusaka M."/>
            <person name="Seki M."/>
            <person name="Sakurai T."/>
            <person name="Satou M."/>
            <person name="Tamse R."/>
            <person name="Vaysberg M."/>
            <person name="Wallender E.K."/>
            <person name="Wong C."/>
            <person name="Yamamura Y."/>
            <person name="Yuan S."/>
            <person name="Shinozaki K."/>
            <person name="Davis R.W."/>
            <person name="Theologis A."/>
            <person name="Ecker J.R."/>
        </authorList>
    </citation>
    <scope>NUCLEOTIDE SEQUENCE [LARGE SCALE MRNA]</scope>
    <source>
        <strain>cv. Columbia</strain>
    </source>
</reference>
<reference key="4">
    <citation type="journal article" date="2012" name="Science">
        <title>Chloroplast biogenesis is regulated by direct action of the ubiquitin-proteasome system.</title>
        <authorList>
            <person name="Ling Q."/>
            <person name="Huang W."/>
            <person name="Baldwin A."/>
            <person name="Jarvis P."/>
        </authorList>
    </citation>
    <scope>SUBCELLULAR LOCATION</scope>
</reference>
<proteinExistence type="evidence at transcript level"/>
<evidence type="ECO:0000250" key="1">
    <source>
        <dbReference type="UniProtKB" id="Q8L7N4"/>
    </source>
</evidence>
<evidence type="ECO:0000255" key="2"/>
<evidence type="ECO:0000255" key="3">
    <source>
        <dbReference type="PROSITE-ProRule" id="PRU00175"/>
    </source>
</evidence>
<evidence type="ECO:0000269" key="4">
    <source>
    </source>
</evidence>
<evidence type="ECO:0000303" key="5">
    <source>
    </source>
</evidence>
<evidence type="ECO:0000305" key="6"/>
<evidence type="ECO:0000312" key="7">
    <source>
        <dbReference type="Araport" id="AT1G54150"/>
    </source>
</evidence>
<evidence type="ECO:0000312" key="8">
    <source>
        <dbReference type="EMBL" id="AAD25789.1"/>
    </source>
</evidence>
<dbReference type="EC" id="2.3.2.27" evidence="6"/>
<dbReference type="EMBL" id="AC006577">
    <property type="protein sequence ID" value="AAD25789.1"/>
    <property type="molecule type" value="Genomic_DNA"/>
</dbReference>
<dbReference type="EMBL" id="CP002684">
    <property type="protein sequence ID" value="AEE33055.1"/>
    <property type="molecule type" value="Genomic_DNA"/>
</dbReference>
<dbReference type="EMBL" id="AY058075">
    <property type="protein sequence ID" value="AAL24183.1"/>
    <property type="molecule type" value="mRNA"/>
</dbReference>
<dbReference type="EMBL" id="AY143876">
    <property type="protein sequence ID" value="AAN28815.1"/>
    <property type="molecule type" value="mRNA"/>
</dbReference>
<dbReference type="PIR" id="F96582">
    <property type="entry name" value="F96582"/>
</dbReference>
<dbReference type="RefSeq" id="NP_564653.1">
    <property type="nucleotide sequence ID" value="NM_104293.4"/>
</dbReference>
<dbReference type="SMR" id="Q9SYH3"/>
<dbReference type="FunCoup" id="Q9SYH3">
    <property type="interactions" value="1925"/>
</dbReference>
<dbReference type="STRING" id="3702.Q9SYH3"/>
<dbReference type="PaxDb" id="3702-AT1G54150.1"/>
<dbReference type="ProteomicsDB" id="228396"/>
<dbReference type="EnsemblPlants" id="AT1G54150.1">
    <property type="protein sequence ID" value="AT1G54150.1"/>
    <property type="gene ID" value="AT1G54150"/>
</dbReference>
<dbReference type="GeneID" id="841855"/>
<dbReference type="Gramene" id="AT1G54150.1">
    <property type="protein sequence ID" value="AT1G54150.1"/>
    <property type="gene ID" value="AT1G54150"/>
</dbReference>
<dbReference type="KEGG" id="ath:AT1G54150"/>
<dbReference type="Araport" id="AT1G54150"/>
<dbReference type="TAIR" id="AT1G54150">
    <property type="gene designation" value="SPL2"/>
</dbReference>
<dbReference type="eggNOG" id="KOG1571">
    <property type="taxonomic scope" value="Eukaryota"/>
</dbReference>
<dbReference type="HOGENOM" id="CLU_050604_0_0_1"/>
<dbReference type="InParanoid" id="Q9SYH3"/>
<dbReference type="OMA" id="RWPQSDY"/>
<dbReference type="OrthoDB" id="1711136at2759"/>
<dbReference type="PhylomeDB" id="Q9SYH3"/>
<dbReference type="BRENDA" id="2.3.2.27">
    <property type="organism ID" value="399"/>
</dbReference>
<dbReference type="UniPathway" id="UPA00143"/>
<dbReference type="PRO" id="PR:Q9SYH3"/>
<dbReference type="Proteomes" id="UP000006548">
    <property type="component" value="Chromosome 1"/>
</dbReference>
<dbReference type="ExpressionAtlas" id="Q9SYH3">
    <property type="expression patterns" value="baseline and differential"/>
</dbReference>
<dbReference type="GO" id="GO:0009507">
    <property type="term" value="C:chloroplast"/>
    <property type="evidence" value="ECO:0000314"/>
    <property type="project" value="TAIR"/>
</dbReference>
<dbReference type="GO" id="GO:0009941">
    <property type="term" value="C:chloroplast envelope"/>
    <property type="evidence" value="ECO:0000314"/>
    <property type="project" value="TAIR"/>
</dbReference>
<dbReference type="GO" id="GO:0009707">
    <property type="term" value="C:chloroplast outer membrane"/>
    <property type="evidence" value="ECO:0007669"/>
    <property type="project" value="UniProtKB-SubCell"/>
</dbReference>
<dbReference type="GO" id="GO:0004842">
    <property type="term" value="F:ubiquitin-protein transferase activity"/>
    <property type="evidence" value="ECO:0007669"/>
    <property type="project" value="InterPro"/>
</dbReference>
<dbReference type="GO" id="GO:0008270">
    <property type="term" value="F:zinc ion binding"/>
    <property type="evidence" value="ECO:0007669"/>
    <property type="project" value="UniProtKB-KW"/>
</dbReference>
<dbReference type="GO" id="GO:0016567">
    <property type="term" value="P:protein ubiquitination"/>
    <property type="evidence" value="ECO:0007669"/>
    <property type="project" value="UniProtKB-UniPathway"/>
</dbReference>
<dbReference type="CDD" id="cd23145">
    <property type="entry name" value="RING-HC_SPL2-like"/>
    <property type="match status" value="1"/>
</dbReference>
<dbReference type="Gene3D" id="3.30.40.10">
    <property type="entry name" value="Zinc/RING finger domain, C3HC4 (zinc finger)"/>
    <property type="match status" value="1"/>
</dbReference>
<dbReference type="InterPro" id="IPR022170">
    <property type="entry name" value="MUL1-like"/>
</dbReference>
<dbReference type="InterPro" id="IPR044247">
    <property type="entry name" value="SPL2-like"/>
</dbReference>
<dbReference type="InterPro" id="IPR001841">
    <property type="entry name" value="Znf_RING"/>
</dbReference>
<dbReference type="InterPro" id="IPR013083">
    <property type="entry name" value="Znf_RING/FYVE/PHD"/>
</dbReference>
<dbReference type="PANTHER" id="PTHR47355">
    <property type="entry name" value="E3 UBIQUITIN-PROTEIN LIGASE SPL2"/>
    <property type="match status" value="1"/>
</dbReference>
<dbReference type="PANTHER" id="PTHR47355:SF1">
    <property type="entry name" value="E3 UBIQUITIN-PROTEIN LIGASE SPL2"/>
    <property type="match status" value="1"/>
</dbReference>
<dbReference type="Pfam" id="PF12483">
    <property type="entry name" value="GIDE"/>
    <property type="match status" value="1"/>
</dbReference>
<dbReference type="Pfam" id="PF13920">
    <property type="entry name" value="zf-C3HC4_3"/>
    <property type="match status" value="1"/>
</dbReference>
<dbReference type="SMART" id="SM00184">
    <property type="entry name" value="RING"/>
    <property type="match status" value="1"/>
</dbReference>
<dbReference type="SUPFAM" id="SSF57850">
    <property type="entry name" value="RING/U-box"/>
    <property type="match status" value="1"/>
</dbReference>
<dbReference type="PROSITE" id="PS50089">
    <property type="entry name" value="ZF_RING_2"/>
    <property type="match status" value="1"/>
</dbReference>
<gene>
    <name evidence="5" type="primary">SPL2</name>
    <name evidence="7" type="ordered locus">At1g54150</name>
    <name evidence="8" type="ORF">F15I1.25</name>
</gene>
<keyword id="KW-0150">Chloroplast</keyword>
<keyword id="KW-0472">Membrane</keyword>
<keyword id="KW-0479">Metal-binding</keyword>
<keyword id="KW-0934">Plastid</keyword>
<keyword id="KW-1002">Plastid outer membrane</keyword>
<keyword id="KW-1185">Reference proteome</keyword>
<keyword id="KW-0808">Transferase</keyword>
<keyword id="KW-0812">Transmembrane</keyword>
<keyword id="KW-1133">Transmembrane helix</keyword>
<keyword id="KW-0833">Ubl conjugation pathway</keyword>
<keyword id="KW-0862">Zinc</keyword>
<keyword id="KW-0863">Zinc-finger</keyword>
<accession>Q9SYH3</accession>
<sequence length="383" mass="42697">MSSPERALLNLLTDIALSFDGAILGLTLAVSAVGSALKYASTNAALKKIKDAPEVSISDLRSLLPASEDKSETNDNRKSNDQRIVVVRGVVKPKISGDEGYKNNNVLISPETGDKALIIQRTQTYVYSGWKRLFQSTGHRFMLERSLRKHGADFTRTVPFVIVGKDQQSNSSFVAVNMDGSRQPLPLTTVYNRLQPINSSFLQAFLYPDYPVGLLDIEKILPPGKDITAVGIYSFNNGVPEIKSCQDLPYFLSEMTKDKMIEDLMEQTNFIFLGSVILGIVSVGILSYAAVRTWNKWKQWNHQRELPQRPNDSVVDDEPEDADEIPDGELCVICVSRRRVPAFIPCGHVVCCRRCASTVERELNPKCPVCLQSIRGSMRVYYS</sequence>
<feature type="chain" id="PRO_0000436710" description="E3 ubiquitin-protein ligase SPL2">
    <location>
        <begin position="1"/>
        <end position="383"/>
    </location>
</feature>
<feature type="topological domain" description="Cytoplasmic" evidence="6">
    <location>
        <begin position="1"/>
        <end position="14"/>
    </location>
</feature>
<feature type="transmembrane region" description="Helical" evidence="2">
    <location>
        <begin position="15"/>
        <end position="35"/>
    </location>
</feature>
<feature type="topological domain" description="Chloroplast intermembrane" evidence="6">
    <location>
        <begin position="36"/>
        <end position="269"/>
    </location>
</feature>
<feature type="transmembrane region" description="Helical" evidence="2">
    <location>
        <begin position="270"/>
        <end position="290"/>
    </location>
</feature>
<feature type="topological domain" description="Cytoplasmic" evidence="6">
    <location>
        <begin position="291"/>
        <end position="383"/>
    </location>
</feature>
<feature type="zinc finger region" description="RING-type" evidence="3">
    <location>
        <begin position="331"/>
        <end position="370"/>
    </location>
</feature>
<protein>
    <recommendedName>
        <fullName evidence="6">E3 ubiquitin-protein ligase SPL2</fullName>
        <ecNumber evidence="6">2.3.2.27</ecNumber>
    </recommendedName>
    <alternativeName>
        <fullName evidence="6">RING-type E3 ubiquitin transferase SPL2</fullName>
    </alternativeName>
    <alternativeName>
        <fullName evidence="5">SP1-like protein 2</fullName>
    </alternativeName>
</protein>